<feature type="chain" id="PRO_0000439811" description="Amino-acid permease GAP6">
    <location>
        <begin position="1"/>
        <end position="568"/>
    </location>
</feature>
<feature type="transmembrane region" description="Helical" evidence="1">
    <location>
        <begin position="70"/>
        <end position="90"/>
    </location>
</feature>
<feature type="transmembrane region" description="Helical" evidence="1">
    <location>
        <begin position="96"/>
        <end position="116"/>
    </location>
</feature>
<feature type="transmembrane region" description="Helical" evidence="1">
    <location>
        <begin position="151"/>
        <end position="171"/>
    </location>
</feature>
<feature type="transmembrane region" description="Helical" evidence="1">
    <location>
        <begin position="175"/>
        <end position="195"/>
    </location>
</feature>
<feature type="transmembrane region" description="Helical" evidence="1">
    <location>
        <begin position="206"/>
        <end position="226"/>
    </location>
</feature>
<feature type="transmembrane region" description="Helical" evidence="1">
    <location>
        <begin position="250"/>
        <end position="270"/>
    </location>
</feature>
<feature type="transmembrane region" description="Helical" evidence="1">
    <location>
        <begin position="290"/>
        <end position="310"/>
    </location>
</feature>
<feature type="transmembrane region" description="Helical" evidence="1">
    <location>
        <begin position="343"/>
        <end position="363"/>
    </location>
</feature>
<feature type="transmembrane region" description="Helical" evidence="1">
    <location>
        <begin position="389"/>
        <end position="409"/>
    </location>
</feature>
<feature type="transmembrane region" description="Helical" evidence="1">
    <location>
        <begin position="418"/>
        <end position="438"/>
    </location>
</feature>
<feature type="transmembrane region" description="Helical" evidence="1">
    <location>
        <begin position="468"/>
        <end position="488"/>
    </location>
</feature>
<feature type="transmembrane region" description="Helical" evidence="1">
    <location>
        <begin position="493"/>
        <end position="513"/>
    </location>
</feature>
<feature type="region of interest" description="Disordered" evidence="3">
    <location>
        <begin position="1"/>
        <end position="29"/>
    </location>
</feature>
<feature type="compositionally biased region" description="Polar residues" evidence="3">
    <location>
        <begin position="9"/>
        <end position="19"/>
    </location>
</feature>
<feature type="glycosylation site" description="N-linked (GlcNAc...) asparagine" evidence="2">
    <location>
        <position position="45"/>
    </location>
</feature>
<protein>
    <recommendedName>
        <fullName>Amino-acid permease GAP6</fullName>
    </recommendedName>
</protein>
<comment type="function">
    <text evidence="7 8">Amino-acid permease with rather broad substrate specificity (PubMed:21764911). Transports many amino acids including proline, methionine, leucine, valine, isoleucine, phenylalanine, tryptophan, threonine and tyrosine, but not basic ones (arginine) and citrulline (PubMed:21764911, PubMed:28028545). Functions as a sensor via detection of some amino acids including methionine, leading to a rapid activation of trehalase, a downstream target of PKA (PubMed:21764911).</text>
</comment>
<comment type="subcellular location">
    <subcellularLocation>
        <location evidence="8">Cell membrane</location>
        <topology evidence="1">Multi-pass membrane protein</topology>
    </subcellularLocation>
</comment>
<comment type="induction">
    <text evidence="4 5 6 8">Expression is under control of the CSY1 amino-acid sensor (PubMed:28028545). Expression is also regulated by PLC1 and GCN4 (PubMed:16207920, PubMed:16215176). Expression is induced during development of rat catheter biofilm (PubMed:19527170).</text>
</comment>
<comment type="similarity">
    <text evidence="9">Belongs to the amino acid-polyamine-organocation (APC) superfamily. YAT (TC 2.A.3.10) family.</text>
</comment>
<evidence type="ECO:0000255" key="1"/>
<evidence type="ECO:0000255" key="2">
    <source>
        <dbReference type="PROSITE-ProRule" id="PRU00498"/>
    </source>
</evidence>
<evidence type="ECO:0000256" key="3">
    <source>
        <dbReference type="SAM" id="MobiDB-lite"/>
    </source>
</evidence>
<evidence type="ECO:0000269" key="4">
    <source>
    </source>
</evidence>
<evidence type="ECO:0000269" key="5">
    <source>
    </source>
</evidence>
<evidence type="ECO:0000269" key="6">
    <source>
    </source>
</evidence>
<evidence type="ECO:0000269" key="7">
    <source>
    </source>
</evidence>
<evidence type="ECO:0000269" key="8">
    <source>
    </source>
</evidence>
<evidence type="ECO:0000305" key="9"/>
<name>GAP6_CANAL</name>
<keyword id="KW-0029">Amino-acid transport</keyword>
<keyword id="KW-1003">Cell membrane</keyword>
<keyword id="KW-0325">Glycoprotein</keyword>
<keyword id="KW-0472">Membrane</keyword>
<keyword id="KW-1185">Reference proteome</keyword>
<keyword id="KW-0812">Transmembrane</keyword>
<keyword id="KW-1133">Transmembrane helix</keyword>
<keyword id="KW-0813">Transport</keyword>
<accession>A0A1D8PNP3</accession>
<gene>
    <name type="primary">GAP6</name>
    <name type="ordered locus">CAALFM_C503500WA</name>
</gene>
<organism>
    <name type="scientific">Candida albicans (strain SC5314 / ATCC MYA-2876)</name>
    <name type="common">Yeast</name>
    <dbReference type="NCBI Taxonomy" id="237561"/>
    <lineage>
        <taxon>Eukaryota</taxon>
        <taxon>Fungi</taxon>
        <taxon>Dikarya</taxon>
        <taxon>Ascomycota</taxon>
        <taxon>Saccharomycotina</taxon>
        <taxon>Pichiomycetes</taxon>
        <taxon>Debaryomycetaceae</taxon>
        <taxon>Candida/Lodderomyces clade</taxon>
        <taxon>Candida</taxon>
    </lineage>
</organism>
<reference key="1">
    <citation type="journal article" date="2004" name="Proc. Natl. Acad. Sci. U.S.A.">
        <title>The diploid genome sequence of Candida albicans.</title>
        <authorList>
            <person name="Jones T."/>
            <person name="Federspiel N.A."/>
            <person name="Chibana H."/>
            <person name="Dungan J."/>
            <person name="Kalman S."/>
            <person name="Magee B.B."/>
            <person name="Newport G."/>
            <person name="Thorstenson Y.R."/>
            <person name="Agabian N."/>
            <person name="Magee P.T."/>
            <person name="Davis R.W."/>
            <person name="Scherer S."/>
        </authorList>
    </citation>
    <scope>NUCLEOTIDE SEQUENCE [LARGE SCALE GENOMIC DNA]</scope>
    <source>
        <strain>SC5314 / ATCC MYA-2876</strain>
    </source>
</reference>
<reference key="2">
    <citation type="journal article" date="2007" name="Genome Biol.">
        <title>Assembly of the Candida albicans genome into sixteen supercontigs aligned on the eight chromosomes.</title>
        <authorList>
            <person name="van het Hoog M."/>
            <person name="Rast T.J."/>
            <person name="Martchenko M."/>
            <person name="Grindle S."/>
            <person name="Dignard D."/>
            <person name="Hogues H."/>
            <person name="Cuomo C."/>
            <person name="Berriman M."/>
            <person name="Scherer S."/>
            <person name="Magee B.B."/>
            <person name="Whiteway M."/>
            <person name="Chibana H."/>
            <person name="Nantel A."/>
            <person name="Magee P.T."/>
        </authorList>
    </citation>
    <scope>GENOME REANNOTATION</scope>
    <source>
        <strain>SC5314 / ATCC MYA-2876</strain>
    </source>
</reference>
<reference key="3">
    <citation type="journal article" date="2013" name="Genome Biol.">
        <title>Assembly of a phased diploid Candida albicans genome facilitates allele-specific measurements and provides a simple model for repeat and indel structure.</title>
        <authorList>
            <person name="Muzzey D."/>
            <person name="Schwartz K."/>
            <person name="Weissman J.S."/>
            <person name="Sherlock G."/>
        </authorList>
    </citation>
    <scope>NUCLEOTIDE SEQUENCE [LARGE SCALE GENOMIC DNA]</scope>
    <scope>GENOME REANNOTATION</scope>
    <source>
        <strain>SC5314 / ATCC MYA-2876</strain>
    </source>
</reference>
<reference key="4">
    <citation type="journal article" date="2005" name="Eukaryot. Cell">
        <title>Global role of the protein kinase Gcn2 in the human pathogen Candida albicans.</title>
        <authorList>
            <person name="Tournu H."/>
            <person name="Tripathi G."/>
            <person name="Bertram G."/>
            <person name="Macaskill S."/>
            <person name="Mavor A."/>
            <person name="Walker L."/>
            <person name="Odds F.C."/>
            <person name="Gow N.A."/>
            <person name="Brown A.J."/>
        </authorList>
    </citation>
    <scope>INDUCTION</scope>
</reference>
<reference key="5">
    <citation type="journal article" date="2005" name="Microbiology">
        <title>Functional analysis of the phospholipase C gene CaPLC1 and two unusual phospholipase C genes, CaPLC2 and CaPLC3, of Candida albicans.</title>
        <authorList>
            <person name="Kunze D."/>
            <person name="Melzer I."/>
            <person name="Bennett D."/>
            <person name="Sanglard D."/>
            <person name="MacCallum D."/>
            <person name="Norskau J."/>
            <person name="Coleman D.C."/>
            <person name="Odds F.C."/>
            <person name="Schafer W."/>
            <person name="Hube B."/>
        </authorList>
    </citation>
    <scope>INDUCTION</scope>
</reference>
<reference key="6">
    <citation type="journal article" date="2009" name="J. Infect. Dis.">
        <title>Time course global gene expression analysis of an in vivo Candida biofilm.</title>
        <authorList>
            <person name="Nett J.E."/>
            <person name="Lepak A.J."/>
            <person name="Marchillo K."/>
            <person name="Andes D.R."/>
        </authorList>
    </citation>
    <scope>INDUCTION</scope>
</reference>
<reference key="7">
    <citation type="journal article" date="2011" name="Eukaryot. Cell">
        <title>The Candida albicans GAP gene family encodes permeases involved in general and specific amino acid uptake and sensing.</title>
        <authorList>
            <person name="Kraidlova L."/>
            <person name="Van Zeebroeck G."/>
            <person name="Van Dijck P."/>
            <person name="Sychrova H."/>
        </authorList>
    </citation>
    <scope>FUNCTION</scope>
    <scope>SUBCELLULAR LOCATION</scope>
</reference>
<reference key="8">
    <citation type="journal article" date="2016" name="MSphere">
        <title>Characterization of the Candida albicans amino acid permease family: Gap2 is the only general amino acid permease and Gap4 is an S-adenosylmethionine (SAM) transporter required for SAM-induced morphogenesis.</title>
        <authorList>
            <person name="Kraidlova L."/>
            <person name="Schrevens S."/>
            <person name="Tournu H."/>
            <person name="Van Zeebroeck G."/>
            <person name="Sychrova H."/>
            <person name="Van Dijck P."/>
        </authorList>
    </citation>
    <scope>FUNCTION</scope>
    <scope>INDUCTION</scope>
    <scope>SUBCELLULAR LOCATION</scope>
</reference>
<sequence>MPKEASSPECYTTSTSSNEISEKPGMWRNFKDSFKPPVPIDDIENGSISSTQLKGGQNVPLQQSLKKRQLQMIALGGCVGSGLLVASGAALRNGPASLLIAWFIVSTFLYCTMQCLAELSSTFPVSGSFAVYSIKFIDPSWGTAMGYNYALFWVVVMPLELVASSMTIKFWPSNINTSVWVAVFYVLIIGTNLFGGTRAFGETEFVASVIKLLGIVGFNILAIVLICGGGDQGYIGGKNWHPPFTTGVKGVISVLLTATYSLAGTELVGLTSAEAAGDARKVLPKAIKQVLWRILIFYLLTLTLVGFLVPASDPQLIGGGSGASASPFVIAIREGGIKGLPSVFNVVVLVALLAIANSAVYGFSRTILALAEQGVAPSIFKYVDRQGRPLAGIATSAIVGLLSFVSASKQQEQVFDWLVALSGLSTFFTWGSINAAHIRFRIAMKVQGRSLDELPYKANTGVLGAYYGLIMNVAVLALQFWLAVWPIGGKPDATYFFKQYLAAVLVLAVYVIHKVATRNWKFMVDYKDMDLDSGRSDIDIDILKQELEEEREAYKRQPWYYKFYQFWC</sequence>
<dbReference type="EMBL" id="CP017627">
    <property type="protein sequence ID" value="AOW29762.1"/>
    <property type="molecule type" value="Genomic_DNA"/>
</dbReference>
<dbReference type="RefSeq" id="XP_711412.2">
    <property type="nucleotide sequence ID" value="XM_706320.2"/>
</dbReference>
<dbReference type="SMR" id="A0A1D8PNP3"/>
<dbReference type="STRING" id="237561.A0A1D8PNP3"/>
<dbReference type="GlyCosmos" id="A0A1D8PNP3">
    <property type="glycosylation" value="1 site, No reported glycans"/>
</dbReference>
<dbReference type="EnsemblFungi" id="C5_03500W_A-T">
    <property type="protein sequence ID" value="C5_03500W_A-T-p1"/>
    <property type="gene ID" value="C5_03500W_A"/>
</dbReference>
<dbReference type="GeneID" id="3646968"/>
<dbReference type="KEGG" id="cal:CAALFM_C503500WA"/>
<dbReference type="CGD" id="CAL0000192270">
    <property type="gene designation" value="GAP6"/>
</dbReference>
<dbReference type="VEuPathDB" id="FungiDB:C5_03500W_A"/>
<dbReference type="InParanoid" id="A0A1D8PNP3"/>
<dbReference type="OMA" id="NYALFWV"/>
<dbReference type="OrthoDB" id="3900342at2759"/>
<dbReference type="Proteomes" id="UP000000559">
    <property type="component" value="Chromosome 5"/>
</dbReference>
<dbReference type="GO" id="GO:0016020">
    <property type="term" value="C:membrane"/>
    <property type="evidence" value="ECO:0000318"/>
    <property type="project" value="GO_Central"/>
</dbReference>
<dbReference type="GO" id="GO:0005886">
    <property type="term" value="C:plasma membrane"/>
    <property type="evidence" value="ECO:0007669"/>
    <property type="project" value="UniProtKB-SubCell"/>
</dbReference>
<dbReference type="GO" id="GO:0015171">
    <property type="term" value="F:amino acid transmembrane transporter activity"/>
    <property type="evidence" value="ECO:0000314"/>
    <property type="project" value="CGD"/>
</dbReference>
<dbReference type="GO" id="GO:0003333">
    <property type="term" value="P:amino acid transmembrane transport"/>
    <property type="evidence" value="ECO:0000315"/>
    <property type="project" value="CGD"/>
</dbReference>
<dbReference type="FunFam" id="1.20.1740.10:FF:000158">
    <property type="entry name" value="General amino-acid permease, putative"/>
    <property type="match status" value="1"/>
</dbReference>
<dbReference type="Gene3D" id="1.20.1740.10">
    <property type="entry name" value="Amino acid/polyamine transporter I"/>
    <property type="match status" value="1"/>
</dbReference>
<dbReference type="InterPro" id="IPR004841">
    <property type="entry name" value="AA-permease/SLC12A_dom"/>
</dbReference>
<dbReference type="InterPro" id="IPR050524">
    <property type="entry name" value="APC_YAT"/>
</dbReference>
<dbReference type="PANTHER" id="PTHR43341">
    <property type="entry name" value="AMINO ACID PERMEASE"/>
    <property type="match status" value="1"/>
</dbReference>
<dbReference type="PANTHER" id="PTHR43341:SF1">
    <property type="entry name" value="GENERAL AMINO-ACID PERMEASE GAP1"/>
    <property type="match status" value="1"/>
</dbReference>
<dbReference type="Pfam" id="PF00324">
    <property type="entry name" value="AA_permease"/>
    <property type="match status" value="1"/>
</dbReference>
<dbReference type="PIRSF" id="PIRSF006060">
    <property type="entry name" value="AA_transporter"/>
    <property type="match status" value="1"/>
</dbReference>
<proteinExistence type="evidence at transcript level"/>